<keyword id="KW-0066">ATP synthesis</keyword>
<keyword id="KW-0997">Cell inner membrane</keyword>
<keyword id="KW-1003">Cell membrane</keyword>
<keyword id="KW-0139">CF(1)</keyword>
<keyword id="KW-0375">Hydrogen ion transport</keyword>
<keyword id="KW-0406">Ion transport</keyword>
<keyword id="KW-0472">Membrane</keyword>
<keyword id="KW-0813">Transport</keyword>
<organism>
    <name type="scientific">Francisella philomiragia subsp. philomiragia (strain ATCC 25017 / CCUG 19701 / FSC 153 / O#319-036)</name>
    <dbReference type="NCBI Taxonomy" id="484022"/>
    <lineage>
        <taxon>Bacteria</taxon>
        <taxon>Pseudomonadati</taxon>
        <taxon>Pseudomonadota</taxon>
        <taxon>Gammaproteobacteria</taxon>
        <taxon>Thiotrichales</taxon>
        <taxon>Francisellaceae</taxon>
        <taxon>Francisella</taxon>
    </lineage>
</organism>
<protein>
    <recommendedName>
        <fullName evidence="1">ATP synthase epsilon chain</fullName>
    </recommendedName>
    <alternativeName>
        <fullName evidence="1">ATP synthase F1 sector epsilon subunit</fullName>
    </alternativeName>
    <alternativeName>
        <fullName evidence="1">F-ATPase epsilon subunit</fullName>
    </alternativeName>
</protein>
<evidence type="ECO:0000255" key="1">
    <source>
        <dbReference type="HAMAP-Rule" id="MF_00530"/>
    </source>
</evidence>
<evidence type="ECO:0000256" key="2">
    <source>
        <dbReference type="SAM" id="MobiDB-lite"/>
    </source>
</evidence>
<sequence length="145" mass="15682">MTKKYLKVDVVSPLGSVFKGEADIVSLRGSAGEMGIAYGHTELLSTLPAGVVNVRKDEHTDVLYVSGGIVEVTPTRVTIMVDDMERAENLNQAEAEKARARAQEALKNPDASKLDIEAASKRLSEADARLKALNSSKGLYYSKED</sequence>
<accession>B0TWS8</accession>
<comment type="function">
    <text evidence="1">Produces ATP from ADP in the presence of a proton gradient across the membrane.</text>
</comment>
<comment type="subunit">
    <text evidence="1">F-type ATPases have 2 components, CF(1) - the catalytic core - and CF(0) - the membrane proton channel. CF(1) has five subunits: alpha(3), beta(3), gamma(1), delta(1), epsilon(1). CF(0) has three main subunits: a, b and c.</text>
</comment>
<comment type="subcellular location">
    <subcellularLocation>
        <location evidence="1">Cell inner membrane</location>
        <topology evidence="1">Peripheral membrane protein</topology>
    </subcellularLocation>
</comment>
<comment type="similarity">
    <text evidence="1">Belongs to the ATPase epsilon chain family.</text>
</comment>
<gene>
    <name evidence="1" type="primary">atpC</name>
    <name type="ordered locus">Fphi_0963</name>
</gene>
<dbReference type="EMBL" id="CP000937">
    <property type="protein sequence ID" value="ABZ87186.1"/>
    <property type="molecule type" value="Genomic_DNA"/>
</dbReference>
<dbReference type="SMR" id="B0TWS8"/>
<dbReference type="KEGG" id="fph:Fphi_0963"/>
<dbReference type="eggNOG" id="COG0355">
    <property type="taxonomic scope" value="Bacteria"/>
</dbReference>
<dbReference type="HOGENOM" id="CLU_084338_1_3_6"/>
<dbReference type="GO" id="GO:0005886">
    <property type="term" value="C:plasma membrane"/>
    <property type="evidence" value="ECO:0007669"/>
    <property type="project" value="UniProtKB-SubCell"/>
</dbReference>
<dbReference type="GO" id="GO:0045259">
    <property type="term" value="C:proton-transporting ATP synthase complex"/>
    <property type="evidence" value="ECO:0007669"/>
    <property type="project" value="UniProtKB-KW"/>
</dbReference>
<dbReference type="GO" id="GO:0005524">
    <property type="term" value="F:ATP binding"/>
    <property type="evidence" value="ECO:0007669"/>
    <property type="project" value="UniProtKB-UniRule"/>
</dbReference>
<dbReference type="GO" id="GO:0046933">
    <property type="term" value="F:proton-transporting ATP synthase activity, rotational mechanism"/>
    <property type="evidence" value="ECO:0007669"/>
    <property type="project" value="UniProtKB-UniRule"/>
</dbReference>
<dbReference type="CDD" id="cd12152">
    <property type="entry name" value="F1-ATPase_delta"/>
    <property type="match status" value="1"/>
</dbReference>
<dbReference type="Gene3D" id="2.60.15.10">
    <property type="entry name" value="F0F1 ATP synthase delta/epsilon subunit, N-terminal"/>
    <property type="match status" value="1"/>
</dbReference>
<dbReference type="HAMAP" id="MF_00530">
    <property type="entry name" value="ATP_synth_epsil_bac"/>
    <property type="match status" value="1"/>
</dbReference>
<dbReference type="InterPro" id="IPR036794">
    <property type="entry name" value="ATP_F1_dsu/esu_C_sf"/>
</dbReference>
<dbReference type="InterPro" id="IPR001469">
    <property type="entry name" value="ATP_synth_F1_dsu/esu"/>
</dbReference>
<dbReference type="InterPro" id="IPR020546">
    <property type="entry name" value="ATP_synth_F1_dsu/esu_N"/>
</dbReference>
<dbReference type="InterPro" id="IPR036771">
    <property type="entry name" value="ATPsynth_dsu/esu_N"/>
</dbReference>
<dbReference type="NCBIfam" id="TIGR01216">
    <property type="entry name" value="ATP_synt_epsi"/>
    <property type="match status" value="1"/>
</dbReference>
<dbReference type="NCBIfam" id="NF009986">
    <property type="entry name" value="PRK13452.1"/>
    <property type="match status" value="1"/>
</dbReference>
<dbReference type="PANTHER" id="PTHR13822">
    <property type="entry name" value="ATP SYNTHASE DELTA/EPSILON CHAIN"/>
    <property type="match status" value="1"/>
</dbReference>
<dbReference type="PANTHER" id="PTHR13822:SF10">
    <property type="entry name" value="ATP SYNTHASE EPSILON CHAIN, CHLOROPLASTIC"/>
    <property type="match status" value="1"/>
</dbReference>
<dbReference type="Pfam" id="PF02823">
    <property type="entry name" value="ATP-synt_DE_N"/>
    <property type="match status" value="1"/>
</dbReference>
<dbReference type="SUPFAM" id="SSF46604">
    <property type="entry name" value="Epsilon subunit of F1F0-ATP synthase C-terminal domain"/>
    <property type="match status" value="1"/>
</dbReference>
<dbReference type="SUPFAM" id="SSF51344">
    <property type="entry name" value="Epsilon subunit of F1F0-ATP synthase N-terminal domain"/>
    <property type="match status" value="1"/>
</dbReference>
<reference key="1">
    <citation type="submission" date="2007-12" db="EMBL/GenBank/DDBJ databases">
        <title>Complete sequence of chromosome of Francisella philomiragia subsp. philomiragia ATCC 25017.</title>
        <authorList>
            <consortium name="US DOE Joint Genome Institute"/>
            <person name="Copeland A."/>
            <person name="Lucas S."/>
            <person name="Lapidus A."/>
            <person name="Barry K."/>
            <person name="Detter J.C."/>
            <person name="Glavina del Rio T."/>
            <person name="Hammon N."/>
            <person name="Israni S."/>
            <person name="Dalin E."/>
            <person name="Tice H."/>
            <person name="Pitluck S."/>
            <person name="Chain P."/>
            <person name="Malfatti S."/>
            <person name="Shin M."/>
            <person name="Vergez L."/>
            <person name="Schmutz J."/>
            <person name="Larimer F."/>
            <person name="Land M."/>
            <person name="Hauser L."/>
            <person name="Richardson P."/>
        </authorList>
    </citation>
    <scope>NUCLEOTIDE SEQUENCE [LARGE SCALE GENOMIC DNA]</scope>
    <source>
        <strain>ATCC 25017 / CCUG 19701 / FSC 153 / O#319-036</strain>
    </source>
</reference>
<feature type="chain" id="PRO_1000081732" description="ATP synthase epsilon chain">
    <location>
        <begin position="1"/>
        <end position="145"/>
    </location>
</feature>
<feature type="region of interest" description="Disordered" evidence="2">
    <location>
        <begin position="93"/>
        <end position="113"/>
    </location>
</feature>
<feature type="compositionally biased region" description="Basic and acidic residues" evidence="2">
    <location>
        <begin position="93"/>
        <end position="104"/>
    </location>
</feature>
<proteinExistence type="inferred from homology"/>
<name>ATPE_FRAP2</name>